<proteinExistence type="inferred from homology"/>
<reference key="1">
    <citation type="submission" date="2006-10" db="EMBL/GenBank/DDBJ databases">
        <title>Complete sequence of chromosome of Pelobacter propionicus DSM 2379.</title>
        <authorList>
            <consortium name="US DOE Joint Genome Institute"/>
            <person name="Copeland A."/>
            <person name="Lucas S."/>
            <person name="Lapidus A."/>
            <person name="Barry K."/>
            <person name="Detter J.C."/>
            <person name="Glavina del Rio T."/>
            <person name="Hammon N."/>
            <person name="Israni S."/>
            <person name="Dalin E."/>
            <person name="Tice H."/>
            <person name="Pitluck S."/>
            <person name="Saunders E."/>
            <person name="Brettin T."/>
            <person name="Bruce D."/>
            <person name="Han C."/>
            <person name="Tapia R."/>
            <person name="Schmutz J."/>
            <person name="Larimer F."/>
            <person name="Land M."/>
            <person name="Hauser L."/>
            <person name="Kyrpides N."/>
            <person name="Kim E."/>
            <person name="Lovley D."/>
            <person name="Richardson P."/>
        </authorList>
    </citation>
    <scope>NUCLEOTIDE SEQUENCE [LARGE SCALE GENOMIC DNA]</scope>
    <source>
        <strain>DSM 2379 / NBRC 103807 / OttBd1</strain>
    </source>
</reference>
<dbReference type="EC" id="3.5.2.3" evidence="1"/>
<dbReference type="EMBL" id="CP000482">
    <property type="protein sequence ID" value="ABL00133.1"/>
    <property type="molecule type" value="Genomic_DNA"/>
</dbReference>
<dbReference type="RefSeq" id="WP_011736387.1">
    <property type="nucleotide sequence ID" value="NC_008609.1"/>
</dbReference>
<dbReference type="SMR" id="A1AS12"/>
<dbReference type="STRING" id="338966.Ppro_2528"/>
<dbReference type="KEGG" id="ppd:Ppro_2528"/>
<dbReference type="eggNOG" id="COG0044">
    <property type="taxonomic scope" value="Bacteria"/>
</dbReference>
<dbReference type="HOGENOM" id="CLU_015572_1_0_7"/>
<dbReference type="OrthoDB" id="9803027at2"/>
<dbReference type="UniPathway" id="UPA00070">
    <property type="reaction ID" value="UER00117"/>
</dbReference>
<dbReference type="Proteomes" id="UP000006732">
    <property type="component" value="Chromosome"/>
</dbReference>
<dbReference type="GO" id="GO:0005737">
    <property type="term" value="C:cytoplasm"/>
    <property type="evidence" value="ECO:0007669"/>
    <property type="project" value="TreeGrafter"/>
</dbReference>
<dbReference type="GO" id="GO:0004038">
    <property type="term" value="F:allantoinase activity"/>
    <property type="evidence" value="ECO:0007669"/>
    <property type="project" value="TreeGrafter"/>
</dbReference>
<dbReference type="GO" id="GO:0004151">
    <property type="term" value="F:dihydroorotase activity"/>
    <property type="evidence" value="ECO:0007669"/>
    <property type="project" value="UniProtKB-UniRule"/>
</dbReference>
<dbReference type="GO" id="GO:0008270">
    <property type="term" value="F:zinc ion binding"/>
    <property type="evidence" value="ECO:0007669"/>
    <property type="project" value="UniProtKB-UniRule"/>
</dbReference>
<dbReference type="GO" id="GO:0044205">
    <property type="term" value="P:'de novo' UMP biosynthetic process"/>
    <property type="evidence" value="ECO:0007669"/>
    <property type="project" value="UniProtKB-UniRule"/>
</dbReference>
<dbReference type="GO" id="GO:0006145">
    <property type="term" value="P:purine nucleobase catabolic process"/>
    <property type="evidence" value="ECO:0007669"/>
    <property type="project" value="TreeGrafter"/>
</dbReference>
<dbReference type="CDD" id="cd01317">
    <property type="entry name" value="DHOase_IIa"/>
    <property type="match status" value="1"/>
</dbReference>
<dbReference type="Gene3D" id="3.20.20.140">
    <property type="entry name" value="Metal-dependent hydrolases"/>
    <property type="match status" value="1"/>
</dbReference>
<dbReference type="Gene3D" id="2.30.40.10">
    <property type="entry name" value="Urease, subunit C, domain 1"/>
    <property type="match status" value="1"/>
</dbReference>
<dbReference type="HAMAP" id="MF_00220_B">
    <property type="entry name" value="PyrC_classI_B"/>
    <property type="match status" value="1"/>
</dbReference>
<dbReference type="InterPro" id="IPR006680">
    <property type="entry name" value="Amidohydro-rel"/>
</dbReference>
<dbReference type="InterPro" id="IPR004722">
    <property type="entry name" value="DHOase"/>
</dbReference>
<dbReference type="InterPro" id="IPR050138">
    <property type="entry name" value="DHOase/Allantoinase_Hydrolase"/>
</dbReference>
<dbReference type="InterPro" id="IPR002195">
    <property type="entry name" value="Dihydroorotase_CS"/>
</dbReference>
<dbReference type="InterPro" id="IPR011059">
    <property type="entry name" value="Metal-dep_hydrolase_composite"/>
</dbReference>
<dbReference type="InterPro" id="IPR032466">
    <property type="entry name" value="Metal_Hydrolase"/>
</dbReference>
<dbReference type="NCBIfam" id="TIGR00857">
    <property type="entry name" value="pyrC_multi"/>
    <property type="match status" value="1"/>
</dbReference>
<dbReference type="PANTHER" id="PTHR43668">
    <property type="entry name" value="ALLANTOINASE"/>
    <property type="match status" value="1"/>
</dbReference>
<dbReference type="PANTHER" id="PTHR43668:SF2">
    <property type="entry name" value="ALLANTOINASE"/>
    <property type="match status" value="1"/>
</dbReference>
<dbReference type="Pfam" id="PF01979">
    <property type="entry name" value="Amidohydro_1"/>
    <property type="match status" value="1"/>
</dbReference>
<dbReference type="SUPFAM" id="SSF51338">
    <property type="entry name" value="Composite domain of metallo-dependent hydrolases"/>
    <property type="match status" value="1"/>
</dbReference>
<dbReference type="SUPFAM" id="SSF51556">
    <property type="entry name" value="Metallo-dependent hydrolases"/>
    <property type="match status" value="1"/>
</dbReference>
<dbReference type="PROSITE" id="PS00482">
    <property type="entry name" value="DIHYDROOROTASE_1"/>
    <property type="match status" value="1"/>
</dbReference>
<dbReference type="PROSITE" id="PS00483">
    <property type="entry name" value="DIHYDROOROTASE_2"/>
    <property type="match status" value="1"/>
</dbReference>
<sequence>MNLLIQNGRVIDPSQGLDEELDLLVENGLVREMGRGLTAPAGVEIVDAAGCCVVPGLVDMHVHLREPGLEYKEDIESGSRAAVAGGFTSIACMPNTKPVIDNKALARYVIARGREAGLCNVFPVGCLTAGSKGERLAEMGELKEAGCVAVSDDGRPVVNAELMRRALEYARGMQIPVISHAEDLSLVGEGVMNEGFTSTELGLKGIPRVAEDIAIARDVMLAEYTNSPIHIAHVSTSGAVRIIRNAKLRGVRVTCETAPHYFTLTDDAVRGYNTNAKMNPPLREADDVAAIRAGLSDGTIDVIATDHAPHHLDEKDVEFNVAANGIIGLETSLPLSLALVEQGVLTMSQLVERMSCCPSLILGLERGTLAKGAVADITLIDPTLPWVVEADKLASKSTNTPWMGQEMKGAAVATIVAGRVVYRR</sequence>
<keyword id="KW-0378">Hydrolase</keyword>
<keyword id="KW-0479">Metal-binding</keyword>
<keyword id="KW-0665">Pyrimidine biosynthesis</keyword>
<keyword id="KW-1185">Reference proteome</keyword>
<keyword id="KW-0862">Zinc</keyword>
<comment type="function">
    <text evidence="1">Catalyzes the reversible cyclization of carbamoyl aspartate to dihydroorotate.</text>
</comment>
<comment type="catalytic activity">
    <reaction evidence="1">
        <text>(S)-dihydroorotate + H2O = N-carbamoyl-L-aspartate + H(+)</text>
        <dbReference type="Rhea" id="RHEA:24296"/>
        <dbReference type="ChEBI" id="CHEBI:15377"/>
        <dbReference type="ChEBI" id="CHEBI:15378"/>
        <dbReference type="ChEBI" id="CHEBI:30864"/>
        <dbReference type="ChEBI" id="CHEBI:32814"/>
        <dbReference type="EC" id="3.5.2.3"/>
    </reaction>
</comment>
<comment type="cofactor">
    <cofactor evidence="1">
        <name>Zn(2+)</name>
        <dbReference type="ChEBI" id="CHEBI:29105"/>
    </cofactor>
    <text evidence="1">Binds 2 Zn(2+) ions per subunit.</text>
</comment>
<comment type="pathway">
    <text evidence="1">Pyrimidine metabolism; UMP biosynthesis via de novo pathway; (S)-dihydroorotate from bicarbonate: step 3/3.</text>
</comment>
<comment type="similarity">
    <text evidence="1">Belongs to the metallo-dependent hydrolases superfamily. DHOase family. Class I DHOase subfamily.</text>
</comment>
<protein>
    <recommendedName>
        <fullName evidence="1">Dihydroorotase</fullName>
        <shortName evidence="1">DHOase</shortName>
        <ecNumber evidence="1">3.5.2.3</ecNumber>
    </recommendedName>
</protein>
<gene>
    <name evidence="1" type="primary">pyrC</name>
    <name type="ordered locus">Ppro_2528</name>
</gene>
<organism>
    <name type="scientific">Pelobacter propionicus (strain DSM 2379 / NBRC 103807 / OttBd1)</name>
    <dbReference type="NCBI Taxonomy" id="338966"/>
    <lineage>
        <taxon>Bacteria</taxon>
        <taxon>Pseudomonadati</taxon>
        <taxon>Thermodesulfobacteriota</taxon>
        <taxon>Desulfuromonadia</taxon>
        <taxon>Desulfuromonadales</taxon>
        <taxon>Desulfuromonadaceae</taxon>
        <taxon>Pelobacter</taxon>
    </lineage>
</organism>
<feature type="chain" id="PRO_1000024096" description="Dihydroorotase">
    <location>
        <begin position="1"/>
        <end position="424"/>
    </location>
</feature>
<feature type="active site" evidence="1">
    <location>
        <position position="306"/>
    </location>
</feature>
<feature type="binding site" evidence="1">
    <location>
        <position position="61"/>
    </location>
    <ligand>
        <name>Zn(2+)</name>
        <dbReference type="ChEBI" id="CHEBI:29105"/>
        <label>1</label>
    </ligand>
</feature>
<feature type="binding site" evidence="1">
    <location>
        <begin position="63"/>
        <end position="65"/>
    </location>
    <ligand>
        <name>substrate</name>
    </ligand>
</feature>
<feature type="binding site" evidence="1">
    <location>
        <position position="63"/>
    </location>
    <ligand>
        <name>Zn(2+)</name>
        <dbReference type="ChEBI" id="CHEBI:29105"/>
        <label>1</label>
    </ligand>
</feature>
<feature type="binding site" evidence="1">
    <location>
        <position position="95"/>
    </location>
    <ligand>
        <name>substrate</name>
    </ligand>
</feature>
<feature type="binding site" evidence="1">
    <location>
        <position position="153"/>
    </location>
    <ligand>
        <name>Zn(2+)</name>
        <dbReference type="ChEBI" id="CHEBI:29105"/>
        <label>1</label>
    </ligand>
</feature>
<feature type="binding site" evidence="1">
    <location>
        <position position="153"/>
    </location>
    <ligand>
        <name>Zn(2+)</name>
        <dbReference type="ChEBI" id="CHEBI:29105"/>
        <label>2</label>
    </ligand>
</feature>
<feature type="binding site" evidence="1">
    <location>
        <position position="180"/>
    </location>
    <ligand>
        <name>Zn(2+)</name>
        <dbReference type="ChEBI" id="CHEBI:29105"/>
        <label>2</label>
    </ligand>
</feature>
<feature type="binding site" evidence="1">
    <location>
        <position position="233"/>
    </location>
    <ligand>
        <name>Zn(2+)</name>
        <dbReference type="ChEBI" id="CHEBI:29105"/>
        <label>2</label>
    </ligand>
</feature>
<feature type="binding site" evidence="1">
    <location>
        <position position="279"/>
    </location>
    <ligand>
        <name>substrate</name>
    </ligand>
</feature>
<feature type="binding site" evidence="1">
    <location>
        <position position="306"/>
    </location>
    <ligand>
        <name>Zn(2+)</name>
        <dbReference type="ChEBI" id="CHEBI:29105"/>
        <label>1</label>
    </ligand>
</feature>
<feature type="binding site" evidence="1">
    <location>
        <position position="310"/>
    </location>
    <ligand>
        <name>substrate</name>
    </ligand>
</feature>
<evidence type="ECO:0000255" key="1">
    <source>
        <dbReference type="HAMAP-Rule" id="MF_00220"/>
    </source>
</evidence>
<accession>A1AS12</accession>
<name>PYRC_PELPD</name>